<gene>
    <name type="ordered locus">At2g25830</name>
    <name type="ORF">F17H15.14</name>
</gene>
<organism>
    <name type="scientific">Arabidopsis thaliana</name>
    <name type="common">Mouse-ear cress</name>
    <dbReference type="NCBI Taxonomy" id="3702"/>
    <lineage>
        <taxon>Eukaryota</taxon>
        <taxon>Viridiplantae</taxon>
        <taxon>Streptophyta</taxon>
        <taxon>Embryophyta</taxon>
        <taxon>Tracheophyta</taxon>
        <taxon>Spermatophyta</taxon>
        <taxon>Magnoliopsida</taxon>
        <taxon>eudicotyledons</taxon>
        <taxon>Gunneridae</taxon>
        <taxon>Pentapetalae</taxon>
        <taxon>rosids</taxon>
        <taxon>malvids</taxon>
        <taxon>Brassicales</taxon>
        <taxon>Brassicaceae</taxon>
        <taxon>Camelineae</taxon>
        <taxon>Arabidopsis</taxon>
    </lineage>
</organism>
<dbReference type="EMBL" id="AC005395">
    <property type="protein sequence ID" value="AAC42247.2"/>
    <property type="molecule type" value="Genomic_DNA"/>
</dbReference>
<dbReference type="EMBL" id="CP002685">
    <property type="protein sequence ID" value="AEC07757.1"/>
    <property type="molecule type" value="Genomic_DNA"/>
</dbReference>
<dbReference type="EMBL" id="AY114086">
    <property type="protein sequence ID" value="AAM45134.1"/>
    <property type="molecule type" value="mRNA"/>
</dbReference>
<dbReference type="EMBL" id="AY056230">
    <property type="protein sequence ID" value="AAL07079.1"/>
    <property type="molecule type" value="mRNA"/>
</dbReference>
<dbReference type="PIR" id="C84653">
    <property type="entry name" value="C84653"/>
</dbReference>
<dbReference type="RefSeq" id="NP_565610.1">
    <property type="nucleotide sequence ID" value="NM_128143.4"/>
</dbReference>
<dbReference type="SMR" id="O82314"/>
<dbReference type="FunCoup" id="O82314">
    <property type="interactions" value="1507"/>
</dbReference>
<dbReference type="STRING" id="3702.O82314"/>
<dbReference type="PaxDb" id="3702-AT2G25830.1"/>
<dbReference type="ProteomicsDB" id="243202"/>
<dbReference type="EnsemblPlants" id="AT2G25830.1">
    <property type="protein sequence ID" value="AT2G25830.1"/>
    <property type="gene ID" value="AT2G25830"/>
</dbReference>
<dbReference type="GeneID" id="817125"/>
<dbReference type="Gramene" id="AT2G25830.1">
    <property type="protein sequence ID" value="AT2G25830.1"/>
    <property type="gene ID" value="AT2G25830"/>
</dbReference>
<dbReference type="KEGG" id="ath:AT2G25830"/>
<dbReference type="Araport" id="AT2G25830"/>
<dbReference type="TAIR" id="AT2G25830"/>
<dbReference type="eggNOG" id="KOG2972">
    <property type="taxonomic scope" value="Eukaryota"/>
</dbReference>
<dbReference type="HOGENOM" id="CLU_062974_0_0_1"/>
<dbReference type="InParanoid" id="O82314"/>
<dbReference type="OMA" id="FGPGGCM"/>
<dbReference type="PhylomeDB" id="O82314"/>
<dbReference type="PRO" id="PR:O82314"/>
<dbReference type="Proteomes" id="UP000006548">
    <property type="component" value="Chromosome 2"/>
</dbReference>
<dbReference type="ExpressionAtlas" id="O82314">
    <property type="expression patterns" value="baseline and differential"/>
</dbReference>
<dbReference type="GO" id="GO:0009507">
    <property type="term" value="C:chloroplast"/>
    <property type="evidence" value="ECO:0007005"/>
    <property type="project" value="TAIR"/>
</dbReference>
<dbReference type="GO" id="GO:0005773">
    <property type="term" value="C:vacuole"/>
    <property type="evidence" value="ECO:0007005"/>
    <property type="project" value="TAIR"/>
</dbReference>
<dbReference type="FunFam" id="1.10.10.200:FF:000006">
    <property type="entry name" value="Putative transcriptional regulatory protein"/>
    <property type="match status" value="1"/>
</dbReference>
<dbReference type="FunFam" id="3.30.70.980:FF:000011">
    <property type="entry name" value="Putative transcriptional regulatory protein"/>
    <property type="match status" value="1"/>
</dbReference>
<dbReference type="Gene3D" id="1.10.10.200">
    <property type="match status" value="1"/>
</dbReference>
<dbReference type="Gene3D" id="3.30.70.980">
    <property type="match status" value="2"/>
</dbReference>
<dbReference type="HAMAP" id="MF_00693">
    <property type="entry name" value="Transcrip_reg_TACO1"/>
    <property type="match status" value="1"/>
</dbReference>
<dbReference type="InterPro" id="IPR017856">
    <property type="entry name" value="Integrase-like_N"/>
</dbReference>
<dbReference type="InterPro" id="IPR048300">
    <property type="entry name" value="TACO1_YebC-like_2nd/3rd_dom"/>
</dbReference>
<dbReference type="InterPro" id="IPR049083">
    <property type="entry name" value="TACO1_YebC_N"/>
</dbReference>
<dbReference type="InterPro" id="IPR002876">
    <property type="entry name" value="Transcrip_reg_TACO1-like"/>
</dbReference>
<dbReference type="InterPro" id="IPR026564">
    <property type="entry name" value="Transcrip_reg_TACO1-like_dom3"/>
</dbReference>
<dbReference type="InterPro" id="IPR029072">
    <property type="entry name" value="YebC-like"/>
</dbReference>
<dbReference type="PANTHER" id="PTHR12532">
    <property type="entry name" value="TRANSLATIONAL ACTIVATOR OF CYTOCHROME C OXIDASE 1"/>
    <property type="match status" value="1"/>
</dbReference>
<dbReference type="PANTHER" id="PTHR12532:SF0">
    <property type="entry name" value="TRANSLATIONAL ACTIVATOR OF CYTOCHROME C OXIDASE 1"/>
    <property type="match status" value="1"/>
</dbReference>
<dbReference type="Pfam" id="PF20772">
    <property type="entry name" value="TACO1_YebC_N"/>
    <property type="match status" value="1"/>
</dbReference>
<dbReference type="Pfam" id="PF01709">
    <property type="entry name" value="Transcrip_reg"/>
    <property type="match status" value="1"/>
</dbReference>
<dbReference type="SUPFAM" id="SSF75625">
    <property type="entry name" value="YebC-like"/>
    <property type="match status" value="1"/>
</dbReference>
<proteinExistence type="evidence at transcript level"/>
<accession>O82314</accession>
<accession>Q93ZW2</accession>
<reference key="1">
    <citation type="journal article" date="1999" name="Nature">
        <title>Sequence and analysis of chromosome 2 of the plant Arabidopsis thaliana.</title>
        <authorList>
            <person name="Lin X."/>
            <person name="Kaul S."/>
            <person name="Rounsley S.D."/>
            <person name="Shea T.P."/>
            <person name="Benito M.-I."/>
            <person name="Town C.D."/>
            <person name="Fujii C.Y."/>
            <person name="Mason T.M."/>
            <person name="Bowman C.L."/>
            <person name="Barnstead M.E."/>
            <person name="Feldblyum T.V."/>
            <person name="Buell C.R."/>
            <person name="Ketchum K.A."/>
            <person name="Lee J.J."/>
            <person name="Ronning C.M."/>
            <person name="Koo H.L."/>
            <person name="Moffat K.S."/>
            <person name="Cronin L.A."/>
            <person name="Shen M."/>
            <person name="Pai G."/>
            <person name="Van Aken S."/>
            <person name="Umayam L."/>
            <person name="Tallon L.J."/>
            <person name="Gill J.E."/>
            <person name="Adams M.D."/>
            <person name="Carrera A.J."/>
            <person name="Creasy T.H."/>
            <person name="Goodman H.M."/>
            <person name="Somerville C.R."/>
            <person name="Copenhaver G.P."/>
            <person name="Preuss D."/>
            <person name="Nierman W.C."/>
            <person name="White O."/>
            <person name="Eisen J.A."/>
            <person name="Salzberg S.L."/>
            <person name="Fraser C.M."/>
            <person name="Venter J.C."/>
        </authorList>
    </citation>
    <scope>NUCLEOTIDE SEQUENCE [LARGE SCALE GENOMIC DNA]</scope>
    <source>
        <strain>cv. Columbia</strain>
    </source>
</reference>
<reference key="2">
    <citation type="journal article" date="2017" name="Plant J.">
        <title>Araport11: a complete reannotation of the Arabidopsis thaliana reference genome.</title>
        <authorList>
            <person name="Cheng C.Y."/>
            <person name="Krishnakumar V."/>
            <person name="Chan A.P."/>
            <person name="Thibaud-Nissen F."/>
            <person name="Schobel S."/>
            <person name="Town C.D."/>
        </authorList>
    </citation>
    <scope>GENOME REANNOTATION</scope>
    <source>
        <strain>cv. Columbia</strain>
    </source>
</reference>
<reference key="3">
    <citation type="journal article" date="2003" name="Science">
        <title>Empirical analysis of transcriptional activity in the Arabidopsis genome.</title>
        <authorList>
            <person name="Yamada K."/>
            <person name="Lim J."/>
            <person name="Dale J.M."/>
            <person name="Chen H."/>
            <person name="Shinn P."/>
            <person name="Palm C.J."/>
            <person name="Southwick A.M."/>
            <person name="Wu H.C."/>
            <person name="Kim C.J."/>
            <person name="Nguyen M."/>
            <person name="Pham P.K."/>
            <person name="Cheuk R.F."/>
            <person name="Karlin-Newmann G."/>
            <person name="Liu S.X."/>
            <person name="Lam B."/>
            <person name="Sakano H."/>
            <person name="Wu T."/>
            <person name="Yu G."/>
            <person name="Miranda M."/>
            <person name="Quach H.L."/>
            <person name="Tripp M."/>
            <person name="Chang C.H."/>
            <person name="Lee J.M."/>
            <person name="Toriumi M.J."/>
            <person name="Chan M.M."/>
            <person name="Tang C.C."/>
            <person name="Onodera C.S."/>
            <person name="Deng J.M."/>
            <person name="Akiyama K."/>
            <person name="Ansari Y."/>
            <person name="Arakawa T."/>
            <person name="Banh J."/>
            <person name="Banno F."/>
            <person name="Bowser L."/>
            <person name="Brooks S.Y."/>
            <person name="Carninci P."/>
            <person name="Chao Q."/>
            <person name="Choy N."/>
            <person name="Enju A."/>
            <person name="Goldsmith A.D."/>
            <person name="Gurjal M."/>
            <person name="Hansen N.F."/>
            <person name="Hayashizaki Y."/>
            <person name="Johnson-Hopson C."/>
            <person name="Hsuan V.W."/>
            <person name="Iida K."/>
            <person name="Karnes M."/>
            <person name="Khan S."/>
            <person name="Koesema E."/>
            <person name="Ishida J."/>
            <person name="Jiang P.X."/>
            <person name="Jones T."/>
            <person name="Kawai J."/>
            <person name="Kamiya A."/>
            <person name="Meyers C."/>
            <person name="Nakajima M."/>
            <person name="Narusaka M."/>
            <person name="Seki M."/>
            <person name="Sakurai T."/>
            <person name="Satou M."/>
            <person name="Tamse R."/>
            <person name="Vaysberg M."/>
            <person name="Wallender E.K."/>
            <person name="Wong C."/>
            <person name="Yamamura Y."/>
            <person name="Yuan S."/>
            <person name="Shinozaki K."/>
            <person name="Davis R.W."/>
            <person name="Theologis A."/>
            <person name="Ecker J.R."/>
        </authorList>
    </citation>
    <scope>NUCLEOTIDE SEQUENCE [LARGE SCALE MRNA]</scope>
    <source>
        <strain>cv. Columbia</strain>
    </source>
</reference>
<evidence type="ECO:0000305" key="1"/>
<sequence>MASHCSMRVILLRFSNGVSSRSILNSTNHRLLSLTMTNTLSSLSSISPHTTTSHFTAASQQSDDQNCFRKLQLRKISISTPLCMGRRSSKIAGRKGAQDSKKAKLYCRIGKEVVSAVKKGGPNPVSNTTLATILDKAKELDVPKDIVERNIKRASEKGQEAFIEKIYEVYGYGGVSMVVEVLTDKINRSVAAIRSVVKDYGGKMADSGSVMFKFKRVRVVNIKVTEADKDQLLIIALDAGAEDVIEPPTYEDDTDEDREERYYKIVTSNENYSTILSKLRDEGVNFEPDNGSELLPLTTVEVDDEAMELNKELMQKLLELDDVDAVYIDQK</sequence>
<protein>
    <recommendedName>
        <fullName>Probable transcriptional regulatory protein At2g25830</fullName>
    </recommendedName>
</protein>
<comment type="similarity">
    <text evidence="1">Belongs to the TACO1 family.</text>
</comment>
<keyword id="KW-1185">Reference proteome</keyword>
<feature type="chain" id="PRO_0000175944" description="Probable transcriptional regulatory protein At2g25830">
    <location>
        <begin position="1"/>
        <end position="331"/>
    </location>
</feature>
<feature type="sequence conflict" description="In Ref. 3; AAM45134/AAL07079." evidence="1" ref="3">
    <location>
        <position position="87"/>
    </location>
</feature>
<name>U082_ARATH</name>